<accession>Q1C0X5</accession>
<evidence type="ECO:0000255" key="1">
    <source>
        <dbReference type="HAMAP-Rule" id="MF_01160"/>
    </source>
</evidence>
<protein>
    <recommendedName>
        <fullName evidence="1">Divalent-cation tolerance protein CutA</fullName>
    </recommendedName>
</protein>
<sequence length="119" mass="13173">MSDSDAMTDPNAVSYSNAIVVLCTAPDEASAQNLAAQVLGEKLAACVTLLPGATSLYYWEGKLEQEYEVQLLFKSNTDHQQALLTYIKQHHPYQTPELLVLPVRDGDKDYLSWLNASLL</sequence>
<name>CUTA_YERPA</name>
<reference key="1">
    <citation type="journal article" date="2006" name="J. Bacteriol.">
        <title>Complete genome sequence of Yersinia pestis strains Antiqua and Nepal516: evidence of gene reduction in an emerging pathogen.</title>
        <authorList>
            <person name="Chain P.S.G."/>
            <person name="Hu P."/>
            <person name="Malfatti S.A."/>
            <person name="Radnedge L."/>
            <person name="Larimer F."/>
            <person name="Vergez L.M."/>
            <person name="Worsham P."/>
            <person name="Chu M.C."/>
            <person name="Andersen G.L."/>
        </authorList>
    </citation>
    <scope>NUCLEOTIDE SEQUENCE [LARGE SCALE GENOMIC DNA]</scope>
    <source>
        <strain>Antiqua</strain>
    </source>
</reference>
<comment type="function">
    <text evidence="1">Involved in resistance toward heavy metals.</text>
</comment>
<comment type="cofactor">
    <cofactor evidence="1">
        <name>Cu cation</name>
        <dbReference type="ChEBI" id="CHEBI:23378"/>
    </cofactor>
    <text evidence="1">Binds 1 copper ion per subunit.</text>
</comment>
<comment type="subunit">
    <text evidence="1">Homotrimer.</text>
</comment>
<comment type="subcellular location">
    <subcellularLocation>
        <location evidence="1">Cytoplasm</location>
    </subcellularLocation>
</comment>
<comment type="similarity">
    <text evidence="1">Belongs to the CutA family.</text>
</comment>
<feature type="chain" id="PRO_0000280489" description="Divalent-cation tolerance protein CutA">
    <location>
        <begin position="1"/>
        <end position="119"/>
    </location>
</feature>
<feature type="binding site" evidence="1">
    <location>
        <position position="23"/>
    </location>
    <ligand>
        <name>Cu cation</name>
        <dbReference type="ChEBI" id="CHEBI:23378"/>
    </ligand>
</feature>
<feature type="binding site" evidence="1">
    <location>
        <position position="90"/>
    </location>
    <ligand>
        <name>Cu cation</name>
        <dbReference type="ChEBI" id="CHEBI:23378"/>
    </ligand>
</feature>
<feature type="binding site" evidence="1">
    <location>
        <position position="91"/>
    </location>
    <ligand>
        <name>Cu cation</name>
        <dbReference type="ChEBI" id="CHEBI:23378"/>
    </ligand>
</feature>
<proteinExistence type="inferred from homology"/>
<keyword id="KW-0186">Copper</keyword>
<keyword id="KW-0963">Cytoplasm</keyword>
<keyword id="KW-0479">Metal-binding</keyword>
<dbReference type="EMBL" id="CP000308">
    <property type="protein sequence ID" value="ABG15897.1"/>
    <property type="molecule type" value="Genomic_DNA"/>
</dbReference>
<dbReference type="RefSeq" id="WP_002209122.1">
    <property type="nucleotide sequence ID" value="NZ_CP009906.1"/>
</dbReference>
<dbReference type="SMR" id="Q1C0X5"/>
<dbReference type="GeneID" id="57974262"/>
<dbReference type="KEGG" id="ypa:YPA_3936"/>
<dbReference type="Proteomes" id="UP000001971">
    <property type="component" value="Chromosome"/>
</dbReference>
<dbReference type="GO" id="GO:0005737">
    <property type="term" value="C:cytoplasm"/>
    <property type="evidence" value="ECO:0007669"/>
    <property type="project" value="UniProtKB-SubCell"/>
</dbReference>
<dbReference type="GO" id="GO:0005507">
    <property type="term" value="F:copper ion binding"/>
    <property type="evidence" value="ECO:0007669"/>
    <property type="project" value="UniProtKB-UniRule"/>
</dbReference>
<dbReference type="GO" id="GO:0010038">
    <property type="term" value="P:response to metal ion"/>
    <property type="evidence" value="ECO:0007669"/>
    <property type="project" value="InterPro"/>
</dbReference>
<dbReference type="FunFam" id="3.30.70.120:FF:000004">
    <property type="entry name" value="Divalent-cation tolerance protein CutA"/>
    <property type="match status" value="1"/>
</dbReference>
<dbReference type="Gene3D" id="3.30.70.120">
    <property type="match status" value="1"/>
</dbReference>
<dbReference type="HAMAP" id="MF_01160">
    <property type="entry name" value="CutA"/>
    <property type="match status" value="1"/>
</dbReference>
<dbReference type="InterPro" id="IPR023700">
    <property type="entry name" value="CutA_Enterobact"/>
</dbReference>
<dbReference type="InterPro" id="IPR004323">
    <property type="entry name" value="Ion_tolerance_CutA"/>
</dbReference>
<dbReference type="InterPro" id="IPR011322">
    <property type="entry name" value="N-reg_PII-like_a/b"/>
</dbReference>
<dbReference type="InterPro" id="IPR015867">
    <property type="entry name" value="N-reg_PII/ATP_PRibTrfase_C"/>
</dbReference>
<dbReference type="NCBIfam" id="NF007930">
    <property type="entry name" value="PRK10645.1"/>
    <property type="match status" value="1"/>
</dbReference>
<dbReference type="PANTHER" id="PTHR23419">
    <property type="entry name" value="DIVALENT CATION TOLERANCE CUTA-RELATED"/>
    <property type="match status" value="1"/>
</dbReference>
<dbReference type="PANTHER" id="PTHR23419:SF8">
    <property type="entry name" value="FI09726P"/>
    <property type="match status" value="1"/>
</dbReference>
<dbReference type="Pfam" id="PF03091">
    <property type="entry name" value="CutA1"/>
    <property type="match status" value="1"/>
</dbReference>
<dbReference type="SUPFAM" id="SSF54913">
    <property type="entry name" value="GlnB-like"/>
    <property type="match status" value="1"/>
</dbReference>
<gene>
    <name evidence="1" type="primary">cutA</name>
    <name type="ordered locus">YPA_3936</name>
</gene>
<organism>
    <name type="scientific">Yersinia pestis bv. Antiqua (strain Antiqua)</name>
    <dbReference type="NCBI Taxonomy" id="360102"/>
    <lineage>
        <taxon>Bacteria</taxon>
        <taxon>Pseudomonadati</taxon>
        <taxon>Pseudomonadota</taxon>
        <taxon>Gammaproteobacteria</taxon>
        <taxon>Enterobacterales</taxon>
        <taxon>Yersiniaceae</taxon>
        <taxon>Yersinia</taxon>
    </lineage>
</organism>